<sequence length="251" mass="27416">MNILLTNDDGIQAVGLRALYHGLKRAGMNVQVVAPVAEQSAVGHAVSLSSPLRVKKFEEDGFTGLGVYGTPVDCVKLGLTTLLETKPDIVVSGINSGANVGVDILYSGTVSAATEGALMGYPAMAVSYDSFKPEELTDQGDYCAELLKKIPWDSLGDKTVVNLNFPAVPVKDAEELKICRHTRVSWQDWYEAREDPRGHKYYWLNGVMPKEKISPGTDRDLLTKGHITMTPLHFDFTDREAIATLEQSFGI</sequence>
<organism>
    <name type="scientific">Maridesulfovibrio salexigens (strain ATCC 14822 / DSM 2638 / NCIMB 8403 / VKM B-1763)</name>
    <name type="common">Desulfovibrio salexigens</name>
    <dbReference type="NCBI Taxonomy" id="526222"/>
    <lineage>
        <taxon>Bacteria</taxon>
        <taxon>Pseudomonadati</taxon>
        <taxon>Thermodesulfobacteriota</taxon>
        <taxon>Desulfovibrionia</taxon>
        <taxon>Desulfovibrionales</taxon>
        <taxon>Desulfovibrionaceae</taxon>
        <taxon>Maridesulfovibrio</taxon>
    </lineage>
</organism>
<comment type="function">
    <text evidence="1">Nucleotidase that shows phosphatase activity on nucleoside 5'-monophosphates.</text>
</comment>
<comment type="catalytic activity">
    <reaction evidence="1">
        <text>a ribonucleoside 5'-phosphate + H2O = a ribonucleoside + phosphate</text>
        <dbReference type="Rhea" id="RHEA:12484"/>
        <dbReference type="ChEBI" id="CHEBI:15377"/>
        <dbReference type="ChEBI" id="CHEBI:18254"/>
        <dbReference type="ChEBI" id="CHEBI:43474"/>
        <dbReference type="ChEBI" id="CHEBI:58043"/>
        <dbReference type="EC" id="3.1.3.5"/>
    </reaction>
</comment>
<comment type="cofactor">
    <cofactor evidence="1">
        <name>a divalent metal cation</name>
        <dbReference type="ChEBI" id="CHEBI:60240"/>
    </cofactor>
    <text evidence="1">Binds 1 divalent metal cation per subunit.</text>
</comment>
<comment type="subcellular location">
    <subcellularLocation>
        <location evidence="1">Cytoplasm</location>
    </subcellularLocation>
</comment>
<comment type="similarity">
    <text evidence="1">Belongs to the SurE nucleotidase family.</text>
</comment>
<name>SURE_MARSD</name>
<feature type="chain" id="PRO_1000202364" description="5'-nucleotidase SurE">
    <location>
        <begin position="1"/>
        <end position="251"/>
    </location>
</feature>
<feature type="binding site" evidence="1">
    <location>
        <position position="8"/>
    </location>
    <ligand>
        <name>a divalent metal cation</name>
        <dbReference type="ChEBI" id="CHEBI:60240"/>
    </ligand>
</feature>
<feature type="binding site" evidence="1">
    <location>
        <position position="9"/>
    </location>
    <ligand>
        <name>a divalent metal cation</name>
        <dbReference type="ChEBI" id="CHEBI:60240"/>
    </ligand>
</feature>
<feature type="binding site" evidence="1">
    <location>
        <position position="40"/>
    </location>
    <ligand>
        <name>a divalent metal cation</name>
        <dbReference type="ChEBI" id="CHEBI:60240"/>
    </ligand>
</feature>
<feature type="binding site" evidence="1">
    <location>
        <position position="95"/>
    </location>
    <ligand>
        <name>a divalent metal cation</name>
        <dbReference type="ChEBI" id="CHEBI:60240"/>
    </ligand>
</feature>
<gene>
    <name evidence="1" type="primary">surE</name>
    <name type="ordered locus">Desal_1912</name>
</gene>
<evidence type="ECO:0000255" key="1">
    <source>
        <dbReference type="HAMAP-Rule" id="MF_00060"/>
    </source>
</evidence>
<proteinExistence type="inferred from homology"/>
<protein>
    <recommendedName>
        <fullName evidence="1">5'-nucleotidase SurE</fullName>
        <ecNumber evidence="1">3.1.3.5</ecNumber>
    </recommendedName>
    <alternativeName>
        <fullName evidence="1">Nucleoside 5'-monophosphate phosphohydrolase</fullName>
    </alternativeName>
</protein>
<dbReference type="EC" id="3.1.3.5" evidence="1"/>
<dbReference type="EMBL" id="CP001649">
    <property type="protein sequence ID" value="ACS79973.1"/>
    <property type="molecule type" value="Genomic_DNA"/>
</dbReference>
<dbReference type="RefSeq" id="WP_015851789.1">
    <property type="nucleotide sequence ID" value="NC_012881.1"/>
</dbReference>
<dbReference type="SMR" id="C6BUG4"/>
<dbReference type="STRING" id="526222.Desal_1912"/>
<dbReference type="KEGG" id="dsa:Desal_1912"/>
<dbReference type="eggNOG" id="COG0496">
    <property type="taxonomic scope" value="Bacteria"/>
</dbReference>
<dbReference type="HOGENOM" id="CLU_045192_1_3_7"/>
<dbReference type="OrthoDB" id="9780815at2"/>
<dbReference type="Proteomes" id="UP000002601">
    <property type="component" value="Chromosome"/>
</dbReference>
<dbReference type="GO" id="GO:0005737">
    <property type="term" value="C:cytoplasm"/>
    <property type="evidence" value="ECO:0007669"/>
    <property type="project" value="UniProtKB-SubCell"/>
</dbReference>
<dbReference type="GO" id="GO:0008253">
    <property type="term" value="F:5'-nucleotidase activity"/>
    <property type="evidence" value="ECO:0007669"/>
    <property type="project" value="UniProtKB-UniRule"/>
</dbReference>
<dbReference type="GO" id="GO:0046872">
    <property type="term" value="F:metal ion binding"/>
    <property type="evidence" value="ECO:0007669"/>
    <property type="project" value="UniProtKB-UniRule"/>
</dbReference>
<dbReference type="GO" id="GO:0000166">
    <property type="term" value="F:nucleotide binding"/>
    <property type="evidence" value="ECO:0007669"/>
    <property type="project" value="UniProtKB-KW"/>
</dbReference>
<dbReference type="FunFam" id="3.40.1210.10:FF:000001">
    <property type="entry name" value="5'/3'-nucleotidase SurE"/>
    <property type="match status" value="1"/>
</dbReference>
<dbReference type="Gene3D" id="3.40.1210.10">
    <property type="entry name" value="Survival protein SurE-like phosphatase/nucleotidase"/>
    <property type="match status" value="1"/>
</dbReference>
<dbReference type="HAMAP" id="MF_00060">
    <property type="entry name" value="SurE"/>
    <property type="match status" value="1"/>
</dbReference>
<dbReference type="InterPro" id="IPR030048">
    <property type="entry name" value="SurE"/>
</dbReference>
<dbReference type="InterPro" id="IPR002828">
    <property type="entry name" value="SurE-like_Pase/nucleotidase"/>
</dbReference>
<dbReference type="InterPro" id="IPR036523">
    <property type="entry name" value="SurE-like_sf"/>
</dbReference>
<dbReference type="NCBIfam" id="NF001490">
    <property type="entry name" value="PRK00346.1-4"/>
    <property type="match status" value="1"/>
</dbReference>
<dbReference type="NCBIfam" id="TIGR00087">
    <property type="entry name" value="surE"/>
    <property type="match status" value="1"/>
</dbReference>
<dbReference type="PANTHER" id="PTHR30457">
    <property type="entry name" value="5'-NUCLEOTIDASE SURE"/>
    <property type="match status" value="1"/>
</dbReference>
<dbReference type="PANTHER" id="PTHR30457:SF0">
    <property type="entry name" value="PHOSPHATASE, PUTATIVE (AFU_ORTHOLOGUE AFUA_4G01070)-RELATED"/>
    <property type="match status" value="1"/>
</dbReference>
<dbReference type="Pfam" id="PF01975">
    <property type="entry name" value="SurE"/>
    <property type="match status" value="1"/>
</dbReference>
<dbReference type="SUPFAM" id="SSF64167">
    <property type="entry name" value="SurE-like"/>
    <property type="match status" value="1"/>
</dbReference>
<reference key="1">
    <citation type="submission" date="2009-06" db="EMBL/GenBank/DDBJ databases">
        <title>Complete sequence of Desulfovibrio salexigens DSM 2638.</title>
        <authorList>
            <consortium name="US DOE Joint Genome Institute"/>
            <person name="Lucas S."/>
            <person name="Copeland A."/>
            <person name="Lapidus A."/>
            <person name="Glavina del Rio T."/>
            <person name="Tice H."/>
            <person name="Bruce D."/>
            <person name="Goodwin L."/>
            <person name="Pitluck S."/>
            <person name="Munk A.C."/>
            <person name="Brettin T."/>
            <person name="Detter J.C."/>
            <person name="Han C."/>
            <person name="Tapia R."/>
            <person name="Larimer F."/>
            <person name="Land M."/>
            <person name="Hauser L."/>
            <person name="Kyrpides N."/>
            <person name="Anderson I."/>
            <person name="Wall J.D."/>
            <person name="Arkin A.P."/>
            <person name="Dehal P."/>
            <person name="Chivian D."/>
            <person name="Giles B."/>
            <person name="Hazen T.C."/>
        </authorList>
    </citation>
    <scope>NUCLEOTIDE SEQUENCE [LARGE SCALE GENOMIC DNA]</scope>
    <source>
        <strain>ATCC 14822 / DSM 2638 / NCIMB 8403 / VKM B-1763</strain>
    </source>
</reference>
<keyword id="KW-0963">Cytoplasm</keyword>
<keyword id="KW-0378">Hydrolase</keyword>
<keyword id="KW-0479">Metal-binding</keyword>
<keyword id="KW-0547">Nucleotide-binding</keyword>
<keyword id="KW-1185">Reference proteome</keyword>
<accession>C6BUG4</accession>